<sequence length="293" mass="32001">MMRIALFLLTNLAVMLVFGLVLSLTGIQSSSVQGLMIMAGLFGFGGAFVSLLMSKWMALRSVGGEVIEQPRNETERWLLDTVRRQSQQAGIAMPQVAIYQAPDINAFATGARRDASLVAVSTGLLQNMSRDEAEAVIAHEISHVANGDMVTMTLIQGIVNTFVIFISRLIAQVAAGFLSGDRDNEGSSSGNPMVYFAVSMVLELVFGILASIITMWFSRHREFHADAGSARLVGREKMIAALQRLKTSYEPQEAGNLMAFCINGKSKSFSELFMSHPPLDKRIEALRSGEYLK</sequence>
<dbReference type="EC" id="3.4.24.-" evidence="1"/>
<dbReference type="EMBL" id="AM286415">
    <property type="protein sequence ID" value="CAL11948.1"/>
    <property type="molecule type" value="Genomic_DNA"/>
</dbReference>
<dbReference type="RefSeq" id="WP_005170215.1">
    <property type="nucleotide sequence ID" value="NC_008800.1"/>
</dbReference>
<dbReference type="RefSeq" id="YP_001006130.1">
    <property type="nucleotide sequence ID" value="NC_008800.1"/>
</dbReference>
<dbReference type="SMR" id="A1JM73"/>
<dbReference type="MEROPS" id="M48.002"/>
<dbReference type="KEGG" id="yen:YE1869"/>
<dbReference type="PATRIC" id="fig|393305.7.peg.2022"/>
<dbReference type="eggNOG" id="COG0501">
    <property type="taxonomic scope" value="Bacteria"/>
</dbReference>
<dbReference type="HOGENOM" id="CLU_042266_1_0_6"/>
<dbReference type="OrthoDB" id="15218at2"/>
<dbReference type="Proteomes" id="UP000000642">
    <property type="component" value="Chromosome"/>
</dbReference>
<dbReference type="GO" id="GO:0005886">
    <property type="term" value="C:plasma membrane"/>
    <property type="evidence" value="ECO:0007669"/>
    <property type="project" value="UniProtKB-SubCell"/>
</dbReference>
<dbReference type="GO" id="GO:0004222">
    <property type="term" value="F:metalloendopeptidase activity"/>
    <property type="evidence" value="ECO:0007669"/>
    <property type="project" value="UniProtKB-UniRule"/>
</dbReference>
<dbReference type="GO" id="GO:0008270">
    <property type="term" value="F:zinc ion binding"/>
    <property type="evidence" value="ECO:0007669"/>
    <property type="project" value="UniProtKB-UniRule"/>
</dbReference>
<dbReference type="GO" id="GO:0006508">
    <property type="term" value="P:proteolysis"/>
    <property type="evidence" value="ECO:0007669"/>
    <property type="project" value="UniProtKB-KW"/>
</dbReference>
<dbReference type="CDD" id="cd07335">
    <property type="entry name" value="M48B_HtpX_like"/>
    <property type="match status" value="1"/>
</dbReference>
<dbReference type="FunFam" id="3.30.2010.10:FF:000001">
    <property type="entry name" value="Protease HtpX"/>
    <property type="match status" value="1"/>
</dbReference>
<dbReference type="Gene3D" id="3.30.2010.10">
    <property type="entry name" value="Metalloproteases ('zincins'), catalytic domain"/>
    <property type="match status" value="1"/>
</dbReference>
<dbReference type="HAMAP" id="MF_00188">
    <property type="entry name" value="Pept_M48_protease_HtpX"/>
    <property type="match status" value="1"/>
</dbReference>
<dbReference type="InterPro" id="IPR050083">
    <property type="entry name" value="HtpX_protease"/>
</dbReference>
<dbReference type="InterPro" id="IPR022919">
    <property type="entry name" value="Pept_M48_protease_HtpX"/>
</dbReference>
<dbReference type="InterPro" id="IPR001915">
    <property type="entry name" value="Peptidase_M48"/>
</dbReference>
<dbReference type="NCBIfam" id="NF003965">
    <property type="entry name" value="PRK05457.1"/>
    <property type="match status" value="1"/>
</dbReference>
<dbReference type="PANTHER" id="PTHR43221">
    <property type="entry name" value="PROTEASE HTPX"/>
    <property type="match status" value="1"/>
</dbReference>
<dbReference type="PANTHER" id="PTHR43221:SF1">
    <property type="entry name" value="PROTEASE HTPX"/>
    <property type="match status" value="1"/>
</dbReference>
<dbReference type="Pfam" id="PF01435">
    <property type="entry name" value="Peptidase_M48"/>
    <property type="match status" value="1"/>
</dbReference>
<protein>
    <recommendedName>
        <fullName evidence="1">Protease HtpX</fullName>
        <ecNumber evidence="1">3.4.24.-</ecNumber>
    </recommendedName>
    <alternativeName>
        <fullName evidence="1">Heat shock protein HtpX</fullName>
    </alternativeName>
</protein>
<feature type="chain" id="PRO_1000020972" description="Protease HtpX">
    <location>
        <begin position="1"/>
        <end position="293"/>
    </location>
</feature>
<feature type="transmembrane region" description="Helical" evidence="1">
    <location>
        <begin position="4"/>
        <end position="24"/>
    </location>
</feature>
<feature type="transmembrane region" description="Helical" evidence="1">
    <location>
        <begin position="34"/>
        <end position="54"/>
    </location>
</feature>
<feature type="transmembrane region" description="Helical" evidence="1">
    <location>
        <begin position="158"/>
        <end position="178"/>
    </location>
</feature>
<feature type="transmembrane region" description="Helical" evidence="1">
    <location>
        <begin position="193"/>
        <end position="213"/>
    </location>
</feature>
<feature type="active site" evidence="1">
    <location>
        <position position="140"/>
    </location>
</feature>
<feature type="binding site" evidence="1">
    <location>
        <position position="139"/>
    </location>
    <ligand>
        <name>Zn(2+)</name>
        <dbReference type="ChEBI" id="CHEBI:29105"/>
        <note>catalytic</note>
    </ligand>
</feature>
<feature type="binding site" evidence="1">
    <location>
        <position position="143"/>
    </location>
    <ligand>
        <name>Zn(2+)</name>
        <dbReference type="ChEBI" id="CHEBI:29105"/>
        <note>catalytic</note>
    </ligand>
</feature>
<feature type="binding site" evidence="1">
    <location>
        <position position="222"/>
    </location>
    <ligand>
        <name>Zn(2+)</name>
        <dbReference type="ChEBI" id="CHEBI:29105"/>
        <note>catalytic</note>
    </ligand>
</feature>
<name>HTPX_YERE8</name>
<proteinExistence type="inferred from homology"/>
<evidence type="ECO:0000255" key="1">
    <source>
        <dbReference type="HAMAP-Rule" id="MF_00188"/>
    </source>
</evidence>
<accession>A1JM73</accession>
<comment type="cofactor">
    <cofactor evidence="1">
        <name>Zn(2+)</name>
        <dbReference type="ChEBI" id="CHEBI:29105"/>
    </cofactor>
    <text evidence="1">Binds 1 zinc ion per subunit.</text>
</comment>
<comment type="subcellular location">
    <subcellularLocation>
        <location evidence="1">Cell inner membrane</location>
        <topology evidence="1">Multi-pass membrane protein</topology>
    </subcellularLocation>
</comment>
<comment type="similarity">
    <text evidence="1">Belongs to the peptidase M48B family.</text>
</comment>
<reference key="1">
    <citation type="journal article" date="2006" name="PLoS Genet.">
        <title>The complete genome sequence and comparative genome analysis of the high pathogenicity Yersinia enterocolitica strain 8081.</title>
        <authorList>
            <person name="Thomson N.R."/>
            <person name="Howard S."/>
            <person name="Wren B.W."/>
            <person name="Holden M.T.G."/>
            <person name="Crossman L."/>
            <person name="Challis G.L."/>
            <person name="Churcher C."/>
            <person name="Mungall K."/>
            <person name="Brooks K."/>
            <person name="Chillingworth T."/>
            <person name="Feltwell T."/>
            <person name="Abdellah Z."/>
            <person name="Hauser H."/>
            <person name="Jagels K."/>
            <person name="Maddison M."/>
            <person name="Moule S."/>
            <person name="Sanders M."/>
            <person name="Whitehead S."/>
            <person name="Quail M.A."/>
            <person name="Dougan G."/>
            <person name="Parkhill J."/>
            <person name="Prentice M.B."/>
        </authorList>
    </citation>
    <scope>NUCLEOTIDE SEQUENCE [LARGE SCALE GENOMIC DNA]</scope>
    <source>
        <strain>NCTC 13174 / 8081</strain>
    </source>
</reference>
<organism>
    <name type="scientific">Yersinia enterocolitica serotype O:8 / biotype 1B (strain NCTC 13174 / 8081)</name>
    <dbReference type="NCBI Taxonomy" id="393305"/>
    <lineage>
        <taxon>Bacteria</taxon>
        <taxon>Pseudomonadati</taxon>
        <taxon>Pseudomonadota</taxon>
        <taxon>Gammaproteobacteria</taxon>
        <taxon>Enterobacterales</taxon>
        <taxon>Yersiniaceae</taxon>
        <taxon>Yersinia</taxon>
    </lineage>
</organism>
<keyword id="KW-0997">Cell inner membrane</keyword>
<keyword id="KW-1003">Cell membrane</keyword>
<keyword id="KW-0378">Hydrolase</keyword>
<keyword id="KW-0472">Membrane</keyword>
<keyword id="KW-0479">Metal-binding</keyword>
<keyword id="KW-0482">Metalloprotease</keyword>
<keyword id="KW-0645">Protease</keyword>
<keyword id="KW-0346">Stress response</keyword>
<keyword id="KW-0812">Transmembrane</keyword>
<keyword id="KW-1133">Transmembrane helix</keyword>
<keyword id="KW-0862">Zinc</keyword>
<gene>
    <name evidence="1" type="primary">htpX</name>
    <name type="ordered locus">YE1869</name>
</gene>